<comment type="function">
    <text evidence="1">Part of the ABC transporter complex MalEFGK involved in maltose/maltodextrin import. Probably responsible for the translocation of the substrate across the membrane.</text>
</comment>
<comment type="subunit">
    <text evidence="1">The complex is composed of two ATP-binding proteins (MalK), two transmembrane proteins (MalG and MalF) and a solute-binding protein (MalE).</text>
</comment>
<comment type="subcellular location">
    <subcellularLocation>
        <location evidence="1">Cell inner membrane</location>
        <topology evidence="1">Multi-pass membrane protein</topology>
    </subcellularLocation>
</comment>
<comment type="similarity">
    <text evidence="4">Belongs to the binding-protein-dependent transport system permease family. MalFG subfamily.</text>
</comment>
<evidence type="ECO:0000250" key="1">
    <source>
        <dbReference type="UniProtKB" id="P68183"/>
    </source>
</evidence>
<evidence type="ECO:0000255" key="2"/>
<evidence type="ECO:0000255" key="3">
    <source>
        <dbReference type="PROSITE-ProRule" id="PRU00441"/>
    </source>
</evidence>
<evidence type="ECO:0000305" key="4"/>
<keyword id="KW-0997">Cell inner membrane</keyword>
<keyword id="KW-1003">Cell membrane</keyword>
<keyword id="KW-0472">Membrane</keyword>
<keyword id="KW-1185">Reference proteome</keyword>
<keyword id="KW-0762">Sugar transport</keyword>
<keyword id="KW-0812">Transmembrane</keyword>
<keyword id="KW-1133">Transmembrane helix</keyword>
<keyword id="KW-0813">Transport</keyword>
<feature type="chain" id="PRO_0000060088" description="Maltose/maltodextrin transport system permease protein MalG">
    <location>
        <begin position="1"/>
        <end position="296"/>
    </location>
</feature>
<feature type="topological domain" description="Cytoplasmic" evidence="2">
    <location>
        <begin position="1"/>
        <end position="12"/>
    </location>
</feature>
<feature type="transmembrane region" description="Helical" evidence="3">
    <location>
        <begin position="13"/>
        <end position="35"/>
    </location>
</feature>
<feature type="topological domain" description="Periplasmic" evidence="2">
    <location>
        <begin position="36"/>
        <end position="88"/>
    </location>
</feature>
<feature type="transmembrane region" description="Helical" evidence="3">
    <location>
        <begin position="89"/>
        <end position="111"/>
    </location>
</feature>
<feature type="topological domain" description="Cytoplasmic" evidence="2">
    <location>
        <begin position="112"/>
        <end position="123"/>
    </location>
</feature>
<feature type="transmembrane region" description="Helical" evidence="3">
    <location>
        <begin position="124"/>
        <end position="143"/>
    </location>
</feature>
<feature type="topological domain" description="Periplasmic" evidence="2">
    <location>
        <begin position="144"/>
        <end position="152"/>
    </location>
</feature>
<feature type="transmembrane region" description="Helical" evidence="3">
    <location>
        <begin position="153"/>
        <end position="175"/>
    </location>
</feature>
<feature type="topological domain" description="Cytoplasmic" evidence="2">
    <location>
        <begin position="176"/>
        <end position="204"/>
    </location>
</feature>
<feature type="transmembrane region" description="Helical" evidence="3">
    <location>
        <begin position="205"/>
        <end position="227"/>
    </location>
</feature>
<feature type="topological domain" description="Periplasmic" evidence="2">
    <location>
        <begin position="228"/>
        <end position="257"/>
    </location>
</feature>
<feature type="transmembrane region" description="Helical" evidence="3">
    <location>
        <begin position="258"/>
        <end position="280"/>
    </location>
</feature>
<feature type="topological domain" description="Cytoplasmic" evidence="2">
    <location>
        <begin position="281"/>
        <end position="296"/>
    </location>
</feature>
<feature type="domain" description="ABC transmembrane type-1" evidence="3">
    <location>
        <begin position="85"/>
        <end position="281"/>
    </location>
</feature>
<organism>
    <name type="scientific">Shigella flexneri</name>
    <dbReference type="NCBI Taxonomy" id="623"/>
    <lineage>
        <taxon>Bacteria</taxon>
        <taxon>Pseudomonadati</taxon>
        <taxon>Pseudomonadota</taxon>
        <taxon>Gammaproteobacteria</taxon>
        <taxon>Enterobacterales</taxon>
        <taxon>Enterobacteriaceae</taxon>
        <taxon>Shigella</taxon>
    </lineage>
</organism>
<reference key="1">
    <citation type="journal article" date="2002" name="Nucleic Acids Res.">
        <title>Genome sequence of Shigella flexneri 2a: insights into pathogenicity through comparison with genomes of Escherichia coli K12 and O157.</title>
        <authorList>
            <person name="Jin Q."/>
            <person name="Yuan Z."/>
            <person name="Xu J."/>
            <person name="Wang Y."/>
            <person name="Shen Y."/>
            <person name="Lu W."/>
            <person name="Wang J."/>
            <person name="Liu H."/>
            <person name="Yang J."/>
            <person name="Yang F."/>
            <person name="Zhang X."/>
            <person name="Zhang J."/>
            <person name="Yang G."/>
            <person name="Wu H."/>
            <person name="Qu D."/>
            <person name="Dong J."/>
            <person name="Sun L."/>
            <person name="Xue Y."/>
            <person name="Zhao A."/>
            <person name="Gao Y."/>
            <person name="Zhu J."/>
            <person name="Kan B."/>
            <person name="Ding K."/>
            <person name="Chen S."/>
            <person name="Cheng H."/>
            <person name="Yao Z."/>
            <person name="He B."/>
            <person name="Chen R."/>
            <person name="Ma D."/>
            <person name="Qiang B."/>
            <person name="Wen Y."/>
            <person name="Hou Y."/>
            <person name="Yu J."/>
        </authorList>
    </citation>
    <scope>NUCLEOTIDE SEQUENCE [LARGE SCALE GENOMIC DNA]</scope>
    <source>
        <strain>301 / Serotype 2a</strain>
    </source>
</reference>
<reference key="2">
    <citation type="journal article" date="2003" name="Infect. Immun.">
        <title>Complete genome sequence and comparative genomics of Shigella flexneri serotype 2a strain 2457T.</title>
        <authorList>
            <person name="Wei J."/>
            <person name="Goldberg M.B."/>
            <person name="Burland V."/>
            <person name="Venkatesan M.M."/>
            <person name="Deng W."/>
            <person name="Fournier G."/>
            <person name="Mayhew G.F."/>
            <person name="Plunkett G. III"/>
            <person name="Rose D.J."/>
            <person name="Darling A."/>
            <person name="Mau B."/>
            <person name="Perna N.T."/>
            <person name="Payne S.M."/>
            <person name="Runyen-Janecky L.J."/>
            <person name="Zhou S."/>
            <person name="Schwartz D.C."/>
            <person name="Blattner F.R."/>
        </authorList>
    </citation>
    <scope>NUCLEOTIDE SEQUENCE [LARGE SCALE GENOMIC DNA]</scope>
    <source>
        <strain>ATCC 700930 / 2457T / Serotype 2a</strain>
    </source>
</reference>
<dbReference type="EMBL" id="AE005674">
    <property type="protein sequence ID" value="AAN45594.1"/>
    <property type="molecule type" value="Genomic_DNA"/>
</dbReference>
<dbReference type="EMBL" id="AE014073">
    <property type="protein sequence ID" value="AAP18605.1"/>
    <property type="molecule type" value="Genomic_DNA"/>
</dbReference>
<dbReference type="RefSeq" id="NP_709887.1">
    <property type="nucleotide sequence ID" value="NC_004337.2"/>
</dbReference>
<dbReference type="RefSeq" id="WP_001252058.1">
    <property type="nucleotide sequence ID" value="NZ_WPGW01000079.1"/>
</dbReference>
<dbReference type="SMR" id="P68186"/>
<dbReference type="STRING" id="198214.SF4173"/>
<dbReference type="PaxDb" id="198214-SF4173"/>
<dbReference type="GeneID" id="1025406"/>
<dbReference type="GeneID" id="86861565"/>
<dbReference type="KEGG" id="sfl:SF4173"/>
<dbReference type="KEGG" id="sfx:S3558"/>
<dbReference type="PATRIC" id="fig|198214.7.peg.4923"/>
<dbReference type="HOGENOM" id="CLU_016047_1_2_6"/>
<dbReference type="Proteomes" id="UP000001006">
    <property type="component" value="Chromosome"/>
</dbReference>
<dbReference type="Proteomes" id="UP000002673">
    <property type="component" value="Chromosome"/>
</dbReference>
<dbReference type="GO" id="GO:0005886">
    <property type="term" value="C:plasma membrane"/>
    <property type="evidence" value="ECO:0007669"/>
    <property type="project" value="UniProtKB-SubCell"/>
</dbReference>
<dbReference type="GO" id="GO:0015423">
    <property type="term" value="F:ABC-type maltose transporter activity"/>
    <property type="evidence" value="ECO:0007669"/>
    <property type="project" value="TreeGrafter"/>
</dbReference>
<dbReference type="GO" id="GO:0042956">
    <property type="term" value="P:maltodextrin transmembrane transport"/>
    <property type="evidence" value="ECO:0007669"/>
    <property type="project" value="TreeGrafter"/>
</dbReference>
<dbReference type="CDD" id="cd06261">
    <property type="entry name" value="TM_PBP2"/>
    <property type="match status" value="1"/>
</dbReference>
<dbReference type="FunFam" id="1.10.3720.10:FF:000010">
    <property type="entry name" value="Maltose ABC transporter permease MalG"/>
    <property type="match status" value="1"/>
</dbReference>
<dbReference type="Gene3D" id="1.10.3720.10">
    <property type="entry name" value="MetI-like"/>
    <property type="match status" value="1"/>
</dbReference>
<dbReference type="InterPro" id="IPR050901">
    <property type="entry name" value="BP-dep_ABC_trans_perm"/>
</dbReference>
<dbReference type="InterPro" id="IPR000515">
    <property type="entry name" value="MetI-like"/>
</dbReference>
<dbReference type="InterPro" id="IPR035906">
    <property type="entry name" value="MetI-like_sf"/>
</dbReference>
<dbReference type="NCBIfam" id="NF008231">
    <property type="entry name" value="PRK10998.1"/>
    <property type="match status" value="1"/>
</dbReference>
<dbReference type="PANTHER" id="PTHR32243">
    <property type="entry name" value="MALTOSE TRANSPORT SYSTEM PERMEASE-RELATED"/>
    <property type="match status" value="1"/>
</dbReference>
<dbReference type="PANTHER" id="PTHR32243:SF50">
    <property type="entry name" value="MALTOSE_MALTODEXTRIN TRANSPORT SYSTEM PERMEASE PROTEIN MALG"/>
    <property type="match status" value="1"/>
</dbReference>
<dbReference type="Pfam" id="PF00528">
    <property type="entry name" value="BPD_transp_1"/>
    <property type="match status" value="1"/>
</dbReference>
<dbReference type="SUPFAM" id="SSF161098">
    <property type="entry name" value="MetI-like"/>
    <property type="match status" value="1"/>
</dbReference>
<dbReference type="PROSITE" id="PS50928">
    <property type="entry name" value="ABC_TM1"/>
    <property type="match status" value="1"/>
</dbReference>
<name>MALG_SHIFL</name>
<sequence length="296" mass="32225">MAMVQPKSQKARLFITHLLLLLFIAAIMFPLLMVVAISLRQGNFATGSLIPEQISWDHWKLALGFSVEQADGRITPPPFPVLLWLWNSVKVAGISAIGIVALSTTCAYAFARMRFPGKATLLKGMLIFQMFPAVLSLVALYALFDRLGEYIPFIGLNTHGGVIFAYLGGIALHVWTIKGYFETIDSSLEEAAALDGATPWQAFRLVLLPLSVPILAVVFILSFIAAITEVPVASLLLRDVNSYTLAVGMQQYLNPQNYLWGDFAAAAVMSALPITIVFLLAQRWLVNGLTAGGVKG</sequence>
<proteinExistence type="inferred from homology"/>
<gene>
    <name type="primary">malG</name>
    <name type="ordered locus">SF4173</name>
    <name type="ordered locus">S3558</name>
</gene>
<accession>P68186</accession>
<accession>P07622</accession>
<protein>
    <recommendedName>
        <fullName evidence="1">Maltose/maltodextrin transport system permease protein MalG</fullName>
    </recommendedName>
</protein>